<proteinExistence type="inferred from homology"/>
<name>YIHI_ECOK1</name>
<gene>
    <name evidence="1" type="primary">yihI</name>
    <name type="ordered locus">Ecok1_38440</name>
    <name type="ORF">APECO1_2596</name>
</gene>
<protein>
    <recommendedName>
        <fullName evidence="1">Der GTPase-activating protein YihI</fullName>
    </recommendedName>
</protein>
<accession>A1AI48</accession>
<dbReference type="EMBL" id="CP000468">
    <property type="protein sequence ID" value="ABJ03338.1"/>
    <property type="molecule type" value="Genomic_DNA"/>
</dbReference>
<dbReference type="RefSeq" id="WP_001350868.1">
    <property type="nucleotide sequence ID" value="NZ_CADILS010000014.1"/>
</dbReference>
<dbReference type="SMR" id="A1AI48"/>
<dbReference type="KEGG" id="ecv:APECO1_2596"/>
<dbReference type="HOGENOM" id="CLU_094104_2_0_6"/>
<dbReference type="Proteomes" id="UP000008216">
    <property type="component" value="Chromosome"/>
</dbReference>
<dbReference type="GO" id="GO:0005096">
    <property type="term" value="F:GTPase activator activity"/>
    <property type="evidence" value="ECO:0007669"/>
    <property type="project" value="UniProtKB-KW"/>
</dbReference>
<dbReference type="GO" id="GO:0042254">
    <property type="term" value="P:ribosome biogenesis"/>
    <property type="evidence" value="ECO:0007669"/>
    <property type="project" value="UniProtKB-KW"/>
</dbReference>
<dbReference type="HAMAP" id="MF_01058">
    <property type="entry name" value="GAP_YihI"/>
    <property type="match status" value="1"/>
</dbReference>
<dbReference type="InterPro" id="IPR007336">
    <property type="entry name" value="YihI"/>
</dbReference>
<dbReference type="NCBIfam" id="NF003560">
    <property type="entry name" value="PRK05244.1-1"/>
    <property type="match status" value="1"/>
</dbReference>
<dbReference type="Pfam" id="PF04220">
    <property type="entry name" value="YihI"/>
    <property type="match status" value="1"/>
</dbReference>
<reference key="1">
    <citation type="journal article" date="2007" name="J. Bacteriol.">
        <title>The genome sequence of avian pathogenic Escherichia coli strain O1:K1:H7 shares strong similarities with human extraintestinal pathogenic E. coli genomes.</title>
        <authorList>
            <person name="Johnson T.J."/>
            <person name="Kariyawasam S."/>
            <person name="Wannemuehler Y."/>
            <person name="Mangiamele P."/>
            <person name="Johnson S.J."/>
            <person name="Doetkott C."/>
            <person name="Skyberg J.A."/>
            <person name="Lynne A.M."/>
            <person name="Johnson J.R."/>
            <person name="Nolan L.K."/>
        </authorList>
    </citation>
    <scope>NUCLEOTIDE SEQUENCE [LARGE SCALE GENOMIC DNA]</scope>
</reference>
<keyword id="KW-0343">GTPase activation</keyword>
<keyword id="KW-1185">Reference proteome</keyword>
<keyword id="KW-0690">Ribosome biogenesis</keyword>
<sequence length="169" mass="19073">MKPSSSNSRSKGHAKARRKTREELDQEARDRKRQKKRRGHAPGSRAAGGNTTSGSKGQNAPKDPRIGSKTPIPLGVAEKVTKQHKPKSEKPMLSLQAELELLETDERLDALLERLEAGETLSAEEQSWVDVKLDRIDELMQKLGLSYDDDEEEEEDEKQEDMMRLLRGN</sequence>
<feature type="chain" id="PRO_1000064420" description="Der GTPase-activating protein YihI">
    <location>
        <begin position="1"/>
        <end position="169"/>
    </location>
</feature>
<feature type="region of interest" description="Disordered" evidence="2">
    <location>
        <begin position="1"/>
        <end position="92"/>
    </location>
</feature>
<feature type="region of interest" description="Disordered" evidence="2">
    <location>
        <begin position="146"/>
        <end position="169"/>
    </location>
</feature>
<feature type="compositionally biased region" description="Basic residues" evidence="2">
    <location>
        <begin position="10"/>
        <end position="19"/>
    </location>
</feature>
<feature type="compositionally biased region" description="Basic and acidic residues" evidence="2">
    <location>
        <begin position="20"/>
        <end position="30"/>
    </location>
</feature>
<feature type="compositionally biased region" description="Basic residues" evidence="2">
    <location>
        <begin position="31"/>
        <end position="40"/>
    </location>
</feature>
<feature type="compositionally biased region" description="Polar residues" evidence="2">
    <location>
        <begin position="49"/>
        <end position="58"/>
    </location>
</feature>
<feature type="compositionally biased region" description="Acidic residues" evidence="2">
    <location>
        <begin position="147"/>
        <end position="159"/>
    </location>
</feature>
<feature type="compositionally biased region" description="Basic and acidic residues" evidence="2">
    <location>
        <begin position="160"/>
        <end position="169"/>
    </location>
</feature>
<evidence type="ECO:0000255" key="1">
    <source>
        <dbReference type="HAMAP-Rule" id="MF_01058"/>
    </source>
</evidence>
<evidence type="ECO:0000256" key="2">
    <source>
        <dbReference type="SAM" id="MobiDB-lite"/>
    </source>
</evidence>
<organism>
    <name type="scientific">Escherichia coli O1:K1 / APEC</name>
    <dbReference type="NCBI Taxonomy" id="405955"/>
    <lineage>
        <taxon>Bacteria</taxon>
        <taxon>Pseudomonadati</taxon>
        <taxon>Pseudomonadota</taxon>
        <taxon>Gammaproteobacteria</taxon>
        <taxon>Enterobacterales</taxon>
        <taxon>Enterobacteriaceae</taxon>
        <taxon>Escherichia</taxon>
    </lineage>
</organism>
<comment type="function">
    <text evidence="1">A GTPase-activating protein (GAP) that modifies Der/EngA GTPase function. May play a role in ribosome biogenesis.</text>
</comment>
<comment type="subunit">
    <text evidence="1">Interacts with Der.</text>
</comment>
<comment type="similarity">
    <text evidence="1">Belongs to the YihI family.</text>
</comment>